<keyword id="KW-0067">ATP-binding</keyword>
<keyword id="KW-0133">Cell shape</keyword>
<keyword id="KW-0961">Cell wall biogenesis/degradation</keyword>
<keyword id="KW-0963">Cytoplasm</keyword>
<keyword id="KW-0436">Ligase</keyword>
<keyword id="KW-0460">Magnesium</keyword>
<keyword id="KW-0464">Manganese</keyword>
<keyword id="KW-0479">Metal-binding</keyword>
<keyword id="KW-0547">Nucleotide-binding</keyword>
<keyword id="KW-0573">Peptidoglycan synthesis</keyword>
<keyword id="KW-1185">Reference proteome</keyword>
<feature type="chain" id="PRO_1000030441" description="D-alanine--D-alanine ligase">
    <location>
        <begin position="1"/>
        <end position="343"/>
    </location>
</feature>
<feature type="domain" description="ATP-grasp" evidence="2">
    <location>
        <begin position="129"/>
        <end position="335"/>
    </location>
</feature>
<feature type="binding site" evidence="2">
    <location>
        <begin position="162"/>
        <end position="217"/>
    </location>
    <ligand>
        <name>ATP</name>
        <dbReference type="ChEBI" id="CHEBI:30616"/>
    </ligand>
</feature>
<feature type="binding site" evidence="2">
    <location>
        <position position="288"/>
    </location>
    <ligand>
        <name>Mg(2+)</name>
        <dbReference type="ChEBI" id="CHEBI:18420"/>
        <label>1</label>
    </ligand>
</feature>
<feature type="binding site" evidence="2">
    <location>
        <position position="302"/>
    </location>
    <ligand>
        <name>Mg(2+)</name>
        <dbReference type="ChEBI" id="CHEBI:18420"/>
        <label>1</label>
    </ligand>
</feature>
<feature type="binding site" evidence="2">
    <location>
        <position position="302"/>
    </location>
    <ligand>
        <name>Mg(2+)</name>
        <dbReference type="ChEBI" id="CHEBI:18420"/>
        <label>2</label>
    </ligand>
</feature>
<feature type="binding site" evidence="2">
    <location>
        <position position="304"/>
    </location>
    <ligand>
        <name>Mg(2+)</name>
        <dbReference type="ChEBI" id="CHEBI:18420"/>
        <label>2</label>
    </ligand>
</feature>
<reference key="1">
    <citation type="journal article" date="2006" name="Nat. Biotechnol.">
        <title>The genome and transcriptomes of the anti-tumor agent Clostridium novyi-NT.</title>
        <authorList>
            <person name="Bettegowda C."/>
            <person name="Huang X."/>
            <person name="Lin J."/>
            <person name="Cheong I."/>
            <person name="Kohli M."/>
            <person name="Szabo S.A."/>
            <person name="Zhang X."/>
            <person name="Diaz L.A. Jr."/>
            <person name="Velculescu V.E."/>
            <person name="Parmigiani G."/>
            <person name="Kinzler K.W."/>
            <person name="Vogelstein B."/>
            <person name="Zhou S."/>
        </authorList>
    </citation>
    <scope>NUCLEOTIDE SEQUENCE [LARGE SCALE GENOMIC DNA]</scope>
    <source>
        <strain>NT</strain>
    </source>
</reference>
<accession>A0Q323</accession>
<comment type="function">
    <text evidence="2">Cell wall formation.</text>
</comment>
<comment type="catalytic activity">
    <reaction evidence="2">
        <text>2 D-alanine + ATP = D-alanyl-D-alanine + ADP + phosphate + H(+)</text>
        <dbReference type="Rhea" id="RHEA:11224"/>
        <dbReference type="ChEBI" id="CHEBI:15378"/>
        <dbReference type="ChEBI" id="CHEBI:30616"/>
        <dbReference type="ChEBI" id="CHEBI:43474"/>
        <dbReference type="ChEBI" id="CHEBI:57416"/>
        <dbReference type="ChEBI" id="CHEBI:57822"/>
        <dbReference type="ChEBI" id="CHEBI:456216"/>
        <dbReference type="EC" id="6.3.2.4"/>
    </reaction>
</comment>
<comment type="cofactor">
    <cofactor evidence="1">
        <name>Mg(2+)</name>
        <dbReference type="ChEBI" id="CHEBI:18420"/>
    </cofactor>
    <cofactor evidence="1">
        <name>Mn(2+)</name>
        <dbReference type="ChEBI" id="CHEBI:29035"/>
    </cofactor>
    <text evidence="1">Binds 2 magnesium or manganese ions per subunit.</text>
</comment>
<comment type="pathway">
    <text evidence="2">Cell wall biogenesis; peptidoglycan biosynthesis.</text>
</comment>
<comment type="subcellular location">
    <subcellularLocation>
        <location evidence="2">Cytoplasm</location>
    </subcellularLocation>
</comment>
<comment type="similarity">
    <text evidence="2">Belongs to the D-alanine--D-alanine ligase family.</text>
</comment>
<dbReference type="EC" id="6.3.2.4" evidence="2"/>
<dbReference type="EMBL" id="CP000382">
    <property type="protein sequence ID" value="ABK62523.1"/>
    <property type="molecule type" value="Genomic_DNA"/>
</dbReference>
<dbReference type="RefSeq" id="WP_011723004.1">
    <property type="nucleotide sequence ID" value="NC_008593.1"/>
</dbReference>
<dbReference type="SMR" id="A0Q323"/>
<dbReference type="STRING" id="386415.NT01CX_0559"/>
<dbReference type="KEGG" id="cno:NT01CX_0559"/>
<dbReference type="PATRIC" id="fig|386415.7.peg.2063"/>
<dbReference type="eggNOG" id="COG1181">
    <property type="taxonomic scope" value="Bacteria"/>
</dbReference>
<dbReference type="HOGENOM" id="CLU_039268_0_0_9"/>
<dbReference type="UniPathway" id="UPA00219"/>
<dbReference type="Proteomes" id="UP000008220">
    <property type="component" value="Chromosome"/>
</dbReference>
<dbReference type="GO" id="GO:0005829">
    <property type="term" value="C:cytosol"/>
    <property type="evidence" value="ECO:0007669"/>
    <property type="project" value="TreeGrafter"/>
</dbReference>
<dbReference type="GO" id="GO:0005524">
    <property type="term" value="F:ATP binding"/>
    <property type="evidence" value="ECO:0007669"/>
    <property type="project" value="UniProtKB-KW"/>
</dbReference>
<dbReference type="GO" id="GO:0008716">
    <property type="term" value="F:D-alanine-D-alanine ligase activity"/>
    <property type="evidence" value="ECO:0007669"/>
    <property type="project" value="UniProtKB-UniRule"/>
</dbReference>
<dbReference type="GO" id="GO:0046872">
    <property type="term" value="F:metal ion binding"/>
    <property type="evidence" value="ECO:0007669"/>
    <property type="project" value="UniProtKB-KW"/>
</dbReference>
<dbReference type="GO" id="GO:0071555">
    <property type="term" value="P:cell wall organization"/>
    <property type="evidence" value="ECO:0007669"/>
    <property type="project" value="UniProtKB-KW"/>
</dbReference>
<dbReference type="GO" id="GO:0009252">
    <property type="term" value="P:peptidoglycan biosynthetic process"/>
    <property type="evidence" value="ECO:0007669"/>
    <property type="project" value="UniProtKB-UniRule"/>
</dbReference>
<dbReference type="GO" id="GO:0008360">
    <property type="term" value="P:regulation of cell shape"/>
    <property type="evidence" value="ECO:0007669"/>
    <property type="project" value="UniProtKB-KW"/>
</dbReference>
<dbReference type="FunFam" id="3.30.1490.20:FF:000007">
    <property type="entry name" value="D-alanine--D-alanine ligase"/>
    <property type="match status" value="1"/>
</dbReference>
<dbReference type="FunFam" id="3.30.470.20:FF:000008">
    <property type="entry name" value="D-alanine--D-alanine ligase"/>
    <property type="match status" value="1"/>
</dbReference>
<dbReference type="Gene3D" id="3.40.50.20">
    <property type="match status" value="1"/>
</dbReference>
<dbReference type="Gene3D" id="3.30.1490.20">
    <property type="entry name" value="ATP-grasp fold, A domain"/>
    <property type="match status" value="1"/>
</dbReference>
<dbReference type="Gene3D" id="3.30.470.20">
    <property type="entry name" value="ATP-grasp fold, B domain"/>
    <property type="match status" value="1"/>
</dbReference>
<dbReference type="HAMAP" id="MF_00047">
    <property type="entry name" value="Dala_Dala_lig"/>
    <property type="match status" value="1"/>
</dbReference>
<dbReference type="InterPro" id="IPR011761">
    <property type="entry name" value="ATP-grasp"/>
</dbReference>
<dbReference type="InterPro" id="IPR013815">
    <property type="entry name" value="ATP_grasp_subdomain_1"/>
</dbReference>
<dbReference type="InterPro" id="IPR000291">
    <property type="entry name" value="D-Ala_lig_Van_CS"/>
</dbReference>
<dbReference type="InterPro" id="IPR005905">
    <property type="entry name" value="D_ala_D_ala"/>
</dbReference>
<dbReference type="InterPro" id="IPR011095">
    <property type="entry name" value="Dala_Dala_lig_C"/>
</dbReference>
<dbReference type="InterPro" id="IPR011127">
    <property type="entry name" value="Dala_Dala_lig_N"/>
</dbReference>
<dbReference type="InterPro" id="IPR016185">
    <property type="entry name" value="PreATP-grasp_dom_sf"/>
</dbReference>
<dbReference type="NCBIfam" id="TIGR01205">
    <property type="entry name" value="D_ala_D_alaTIGR"/>
    <property type="match status" value="1"/>
</dbReference>
<dbReference type="NCBIfam" id="NF002378">
    <property type="entry name" value="PRK01372.1"/>
    <property type="match status" value="1"/>
</dbReference>
<dbReference type="NCBIfam" id="NF002528">
    <property type="entry name" value="PRK01966.1-4"/>
    <property type="match status" value="1"/>
</dbReference>
<dbReference type="PANTHER" id="PTHR23132">
    <property type="entry name" value="D-ALANINE--D-ALANINE LIGASE"/>
    <property type="match status" value="1"/>
</dbReference>
<dbReference type="PANTHER" id="PTHR23132:SF25">
    <property type="entry name" value="D-ALANINE--D-ALANINE LIGASE A"/>
    <property type="match status" value="1"/>
</dbReference>
<dbReference type="Pfam" id="PF07478">
    <property type="entry name" value="Dala_Dala_lig_C"/>
    <property type="match status" value="1"/>
</dbReference>
<dbReference type="Pfam" id="PF01820">
    <property type="entry name" value="Dala_Dala_lig_N"/>
    <property type="match status" value="1"/>
</dbReference>
<dbReference type="PIRSF" id="PIRSF039102">
    <property type="entry name" value="Ddl/VanB"/>
    <property type="match status" value="1"/>
</dbReference>
<dbReference type="SUPFAM" id="SSF56059">
    <property type="entry name" value="Glutathione synthetase ATP-binding domain-like"/>
    <property type="match status" value="1"/>
</dbReference>
<dbReference type="SUPFAM" id="SSF52440">
    <property type="entry name" value="PreATP-grasp domain"/>
    <property type="match status" value="1"/>
</dbReference>
<dbReference type="PROSITE" id="PS50975">
    <property type="entry name" value="ATP_GRASP"/>
    <property type="match status" value="1"/>
</dbReference>
<dbReference type="PROSITE" id="PS00843">
    <property type="entry name" value="DALA_DALA_LIGASE_1"/>
    <property type="match status" value="1"/>
</dbReference>
<dbReference type="PROSITE" id="PS00844">
    <property type="entry name" value="DALA_DALA_LIGASE_2"/>
    <property type="match status" value="1"/>
</dbReference>
<name>DDL_CLONN</name>
<gene>
    <name evidence="2" type="primary">ddl</name>
    <name type="ordered locus">NT01CX_0559</name>
</gene>
<proteinExistence type="inferred from homology"/>
<sequence>MKKKVAILFGGQSTEHEVSRVSASSVLKNIDLSKYDVYPIGITKDGKWFEYTGAIDKIESGEWEKDEFYKNPNGQEILFNREVDVVFPVMHGLYGEDGTIQGLCKLLTIPCVGPGVMSSAVCMDKVYTKYVLENFGVKQADYVVVNAHDYKNNKMDIISTIENKLGYDVFIKPSNSGSSVGISKAHNREELEAGLEEALKFDRKVLVEVALNAREIEVAVLGNDEPVAATPGEIVPANEFYDYEAKYSNAQSKLLLPANLSPEKLEKVKELAVRIFKMLDCAGMSRVDFLVDKETEEVYLNEINTIPGFTKISMYPKMWQAEGKAYGELISEIIELAVERDNK</sequence>
<protein>
    <recommendedName>
        <fullName evidence="2">D-alanine--D-alanine ligase</fullName>
        <ecNumber evidence="2">6.3.2.4</ecNumber>
    </recommendedName>
    <alternativeName>
        <fullName evidence="2">D-Ala-D-Ala ligase</fullName>
    </alternativeName>
    <alternativeName>
        <fullName evidence="2">D-alanylalanine synthetase</fullName>
    </alternativeName>
</protein>
<evidence type="ECO:0000250" key="1"/>
<evidence type="ECO:0000255" key="2">
    <source>
        <dbReference type="HAMAP-Rule" id="MF_00047"/>
    </source>
</evidence>
<organism>
    <name type="scientific">Clostridium novyi (strain NT)</name>
    <dbReference type="NCBI Taxonomy" id="386415"/>
    <lineage>
        <taxon>Bacteria</taxon>
        <taxon>Bacillati</taxon>
        <taxon>Bacillota</taxon>
        <taxon>Clostridia</taxon>
        <taxon>Eubacteriales</taxon>
        <taxon>Clostridiaceae</taxon>
        <taxon>Clostridium</taxon>
    </lineage>
</organism>